<sequence length="304" mass="32836">MSAKSKGNPSSSSAAEGPPAASKTKVKEQIKIIVEDLELVLGDLKDVAKELKEVVDQIDTLTSDLQLEDEMTDSSKTDTLNSSSSGTTASSIEKIKEQANAPLIKPPAHPSAILTVLRKPNPPPPPPRLTPVRCEEPQRVVPTANPVKTNGTLLRNGGLAGRPNKIPNGDICCIPNSNLDKAPLQSLMHRPEKDRSPQAGPRERVRFNEKVQYHGYCPDCESRYNIKNREVHLHSEPVHPPGKIPHQGPLLHPPPHLPNFPLENGGLGISHSNSFPPPTPATVPPPAAPKPQKTILRKSTTTTV</sequence>
<dbReference type="EMBL" id="AK045646">
    <property type="protein sequence ID" value="BAC32443.1"/>
    <property type="molecule type" value="mRNA"/>
</dbReference>
<dbReference type="EMBL" id="BC132481">
    <property type="protein sequence ID" value="AAI32482.1"/>
    <property type="molecule type" value="mRNA"/>
</dbReference>
<dbReference type="CCDS" id="CCDS37818.1">
    <molecule id="A3KMN5-1"/>
</dbReference>
<dbReference type="RefSeq" id="NP_001074693.1">
    <molecule id="A3KMN5-1"/>
    <property type="nucleotide sequence ID" value="NM_001081224.2"/>
</dbReference>
<dbReference type="SMR" id="A3KMN5"/>
<dbReference type="BioGRID" id="214671">
    <property type="interactions" value="1"/>
</dbReference>
<dbReference type="FunCoup" id="A3KMN5">
    <property type="interactions" value="12"/>
</dbReference>
<dbReference type="STRING" id="10090.ENSMUSP00000112338"/>
<dbReference type="GlyGen" id="A3KMN5">
    <property type="glycosylation" value="1 site"/>
</dbReference>
<dbReference type="PhosphoSitePlus" id="A3KMN5"/>
<dbReference type="jPOST" id="A3KMN5"/>
<dbReference type="PaxDb" id="10090-ENSMUSP00000112338"/>
<dbReference type="ProteomicsDB" id="264973">
    <molecule id="A3KMN5-1"/>
</dbReference>
<dbReference type="ProteomicsDB" id="264974">
    <molecule id="A3KMN5-2"/>
</dbReference>
<dbReference type="Antibodypedia" id="25588">
    <property type="antibodies" value="101 antibodies from 19 providers"/>
</dbReference>
<dbReference type="Ensembl" id="ENSMUST00000116639.4">
    <molecule id="A3KMN5-1"/>
    <property type="protein sequence ID" value="ENSMUSP00000112338.3"/>
    <property type="gene ID" value="ENSMUSG00000073565.6"/>
</dbReference>
<dbReference type="Ensembl" id="ENSMUST00000235541.2">
    <molecule id="A3KMN5-1"/>
    <property type="protein sequence ID" value="ENSMUSP00000158421.2"/>
    <property type="gene ID" value="ENSMUSG00000073565.6"/>
</dbReference>
<dbReference type="GeneID" id="71373"/>
<dbReference type="KEGG" id="mmu:71373"/>
<dbReference type="UCSC" id="uc008ewz.1">
    <molecule id="A3KMN5-1"/>
    <property type="organism name" value="mouse"/>
</dbReference>
<dbReference type="AGR" id="MGI:1918623"/>
<dbReference type="CTD" id="51334"/>
<dbReference type="MGI" id="MGI:1918623">
    <property type="gene designation" value="Prr16"/>
</dbReference>
<dbReference type="VEuPathDB" id="HostDB:ENSMUSG00000073565"/>
<dbReference type="eggNOG" id="ENOG502QQGT">
    <property type="taxonomic scope" value="Eukaryota"/>
</dbReference>
<dbReference type="GeneTree" id="ENSGT00910000144204"/>
<dbReference type="HOGENOM" id="CLU_073752_0_0_1"/>
<dbReference type="InParanoid" id="A3KMN5"/>
<dbReference type="OMA" id="PGKLPHQ"/>
<dbReference type="OrthoDB" id="10019788at2759"/>
<dbReference type="PhylomeDB" id="A3KMN5"/>
<dbReference type="TreeFam" id="TF332746"/>
<dbReference type="BioGRID-ORCS" id="71373">
    <property type="hits" value="0 hits in 78 CRISPR screens"/>
</dbReference>
<dbReference type="ChiTaRS" id="Prr16">
    <property type="organism name" value="mouse"/>
</dbReference>
<dbReference type="PRO" id="PR:A3KMN5"/>
<dbReference type="Proteomes" id="UP000000589">
    <property type="component" value="Chromosome 18"/>
</dbReference>
<dbReference type="RNAct" id="A3KMN5">
    <property type="molecule type" value="protein"/>
</dbReference>
<dbReference type="Bgee" id="ENSMUSG00000073565">
    <property type="expression patterns" value="Expressed in epididymal fat pad and 77 other cell types or tissues"/>
</dbReference>
<dbReference type="GO" id="GO:0045793">
    <property type="term" value="P:positive regulation of cell size"/>
    <property type="evidence" value="ECO:0000314"/>
    <property type="project" value="UniProtKB"/>
</dbReference>
<dbReference type="GO" id="GO:0045727">
    <property type="term" value="P:positive regulation of translation"/>
    <property type="evidence" value="ECO:0000250"/>
    <property type="project" value="UniProtKB"/>
</dbReference>
<dbReference type="InterPro" id="IPR027997">
    <property type="entry name" value="Largen/INSYN1"/>
</dbReference>
<dbReference type="PANTHER" id="PTHR15917">
    <property type="match status" value="1"/>
</dbReference>
<dbReference type="PANTHER" id="PTHR15917:SF0">
    <property type="entry name" value="PROTEIN LARGEN"/>
    <property type="match status" value="1"/>
</dbReference>
<dbReference type="Pfam" id="PF15252">
    <property type="entry name" value="DUF4589"/>
    <property type="match status" value="1"/>
</dbReference>
<reference key="1">
    <citation type="journal article" date="2005" name="Science">
        <title>The transcriptional landscape of the mammalian genome.</title>
        <authorList>
            <person name="Carninci P."/>
            <person name="Kasukawa T."/>
            <person name="Katayama S."/>
            <person name="Gough J."/>
            <person name="Frith M.C."/>
            <person name="Maeda N."/>
            <person name="Oyama R."/>
            <person name="Ravasi T."/>
            <person name="Lenhard B."/>
            <person name="Wells C."/>
            <person name="Kodzius R."/>
            <person name="Shimokawa K."/>
            <person name="Bajic V.B."/>
            <person name="Brenner S.E."/>
            <person name="Batalov S."/>
            <person name="Forrest A.R."/>
            <person name="Zavolan M."/>
            <person name="Davis M.J."/>
            <person name="Wilming L.G."/>
            <person name="Aidinis V."/>
            <person name="Allen J.E."/>
            <person name="Ambesi-Impiombato A."/>
            <person name="Apweiler R."/>
            <person name="Aturaliya R.N."/>
            <person name="Bailey T.L."/>
            <person name="Bansal M."/>
            <person name="Baxter L."/>
            <person name="Beisel K.W."/>
            <person name="Bersano T."/>
            <person name="Bono H."/>
            <person name="Chalk A.M."/>
            <person name="Chiu K.P."/>
            <person name="Choudhary V."/>
            <person name="Christoffels A."/>
            <person name="Clutterbuck D.R."/>
            <person name="Crowe M.L."/>
            <person name="Dalla E."/>
            <person name="Dalrymple B.P."/>
            <person name="de Bono B."/>
            <person name="Della Gatta G."/>
            <person name="di Bernardo D."/>
            <person name="Down T."/>
            <person name="Engstrom P."/>
            <person name="Fagiolini M."/>
            <person name="Faulkner G."/>
            <person name="Fletcher C.F."/>
            <person name="Fukushima T."/>
            <person name="Furuno M."/>
            <person name="Futaki S."/>
            <person name="Gariboldi M."/>
            <person name="Georgii-Hemming P."/>
            <person name="Gingeras T.R."/>
            <person name="Gojobori T."/>
            <person name="Green R.E."/>
            <person name="Gustincich S."/>
            <person name="Harbers M."/>
            <person name="Hayashi Y."/>
            <person name="Hensch T.K."/>
            <person name="Hirokawa N."/>
            <person name="Hill D."/>
            <person name="Huminiecki L."/>
            <person name="Iacono M."/>
            <person name="Ikeo K."/>
            <person name="Iwama A."/>
            <person name="Ishikawa T."/>
            <person name="Jakt M."/>
            <person name="Kanapin A."/>
            <person name="Katoh M."/>
            <person name="Kawasawa Y."/>
            <person name="Kelso J."/>
            <person name="Kitamura H."/>
            <person name="Kitano H."/>
            <person name="Kollias G."/>
            <person name="Krishnan S.P."/>
            <person name="Kruger A."/>
            <person name="Kummerfeld S.K."/>
            <person name="Kurochkin I.V."/>
            <person name="Lareau L.F."/>
            <person name="Lazarevic D."/>
            <person name="Lipovich L."/>
            <person name="Liu J."/>
            <person name="Liuni S."/>
            <person name="McWilliam S."/>
            <person name="Madan Babu M."/>
            <person name="Madera M."/>
            <person name="Marchionni L."/>
            <person name="Matsuda H."/>
            <person name="Matsuzawa S."/>
            <person name="Miki H."/>
            <person name="Mignone F."/>
            <person name="Miyake S."/>
            <person name="Morris K."/>
            <person name="Mottagui-Tabar S."/>
            <person name="Mulder N."/>
            <person name="Nakano N."/>
            <person name="Nakauchi H."/>
            <person name="Ng P."/>
            <person name="Nilsson R."/>
            <person name="Nishiguchi S."/>
            <person name="Nishikawa S."/>
            <person name="Nori F."/>
            <person name="Ohara O."/>
            <person name="Okazaki Y."/>
            <person name="Orlando V."/>
            <person name="Pang K.C."/>
            <person name="Pavan W.J."/>
            <person name="Pavesi G."/>
            <person name="Pesole G."/>
            <person name="Petrovsky N."/>
            <person name="Piazza S."/>
            <person name="Reed J."/>
            <person name="Reid J.F."/>
            <person name="Ring B.Z."/>
            <person name="Ringwald M."/>
            <person name="Rost B."/>
            <person name="Ruan Y."/>
            <person name="Salzberg S.L."/>
            <person name="Sandelin A."/>
            <person name="Schneider C."/>
            <person name="Schoenbach C."/>
            <person name="Sekiguchi K."/>
            <person name="Semple C.A."/>
            <person name="Seno S."/>
            <person name="Sessa L."/>
            <person name="Sheng Y."/>
            <person name="Shibata Y."/>
            <person name="Shimada H."/>
            <person name="Shimada K."/>
            <person name="Silva D."/>
            <person name="Sinclair B."/>
            <person name="Sperling S."/>
            <person name="Stupka E."/>
            <person name="Sugiura K."/>
            <person name="Sultana R."/>
            <person name="Takenaka Y."/>
            <person name="Taki K."/>
            <person name="Tammoja K."/>
            <person name="Tan S.L."/>
            <person name="Tang S."/>
            <person name="Taylor M.S."/>
            <person name="Tegner J."/>
            <person name="Teichmann S.A."/>
            <person name="Ueda H.R."/>
            <person name="van Nimwegen E."/>
            <person name="Verardo R."/>
            <person name="Wei C.L."/>
            <person name="Yagi K."/>
            <person name="Yamanishi H."/>
            <person name="Zabarovsky E."/>
            <person name="Zhu S."/>
            <person name="Zimmer A."/>
            <person name="Hide W."/>
            <person name="Bult C."/>
            <person name="Grimmond S.M."/>
            <person name="Teasdale R.D."/>
            <person name="Liu E.T."/>
            <person name="Brusic V."/>
            <person name="Quackenbush J."/>
            <person name="Wahlestedt C."/>
            <person name="Mattick J.S."/>
            <person name="Hume D.A."/>
            <person name="Kai C."/>
            <person name="Sasaki D."/>
            <person name="Tomaru Y."/>
            <person name="Fukuda S."/>
            <person name="Kanamori-Katayama M."/>
            <person name="Suzuki M."/>
            <person name="Aoki J."/>
            <person name="Arakawa T."/>
            <person name="Iida J."/>
            <person name="Imamura K."/>
            <person name="Itoh M."/>
            <person name="Kato T."/>
            <person name="Kawaji H."/>
            <person name="Kawagashira N."/>
            <person name="Kawashima T."/>
            <person name="Kojima M."/>
            <person name="Kondo S."/>
            <person name="Konno H."/>
            <person name="Nakano K."/>
            <person name="Ninomiya N."/>
            <person name="Nishio T."/>
            <person name="Okada M."/>
            <person name="Plessy C."/>
            <person name="Shibata K."/>
            <person name="Shiraki T."/>
            <person name="Suzuki S."/>
            <person name="Tagami M."/>
            <person name="Waki K."/>
            <person name="Watahiki A."/>
            <person name="Okamura-Oho Y."/>
            <person name="Suzuki H."/>
            <person name="Kawai J."/>
            <person name="Hayashizaki Y."/>
        </authorList>
    </citation>
    <scope>NUCLEOTIDE SEQUENCE [LARGE SCALE MRNA] (ISOFORM 2)</scope>
    <source>
        <strain>C57BL/6J</strain>
        <tissue>Corpora quadrigemina</tissue>
    </source>
</reference>
<reference key="2">
    <citation type="journal article" date="2004" name="Genome Res.">
        <title>The status, quality, and expansion of the NIH full-length cDNA project: the Mammalian Gene Collection (MGC).</title>
        <authorList>
            <consortium name="The MGC Project Team"/>
        </authorList>
    </citation>
    <scope>NUCLEOTIDE SEQUENCE [LARGE SCALE MRNA] (ISOFORM 1)</scope>
    <source>
        <tissue>Brain</tissue>
    </source>
</reference>
<reference key="3">
    <citation type="journal article" date="2014" name="Mol. Cell">
        <title>Largen: a molecular regulator of mammalian cell size control.</title>
        <authorList>
            <person name="Yamamoto K."/>
            <person name="Gandin V."/>
            <person name="Sasaki M."/>
            <person name="McCracken S."/>
            <person name="Li W."/>
            <person name="Silvester J.L."/>
            <person name="Elia A.J."/>
            <person name="Wang F."/>
            <person name="Wakutani Y."/>
            <person name="Alexandrova R."/>
            <person name="Oo Y.D."/>
            <person name="Mullen P.J."/>
            <person name="Inoue S."/>
            <person name="Itsumi M."/>
            <person name="Lapin V."/>
            <person name="Haight J."/>
            <person name="Wakeham A."/>
            <person name="Shahinian A."/>
            <person name="Ikura M."/>
            <person name="Topisirovic I."/>
            <person name="Sonenberg N."/>
            <person name="Mak T.W."/>
        </authorList>
    </citation>
    <scope>FUNCTION</scope>
</reference>
<protein>
    <recommendedName>
        <fullName>Protein Largen</fullName>
    </recommendedName>
    <alternativeName>
        <fullName>Proline-rich protein 16</fullName>
    </alternativeName>
</protein>
<keyword id="KW-0025">Alternative splicing</keyword>
<keyword id="KW-0175">Coiled coil</keyword>
<keyword id="KW-1185">Reference proteome</keyword>
<gene>
    <name type="primary">Prr16</name>
</gene>
<name>LARGN_MOUSE</name>
<comment type="function">
    <text evidence="4">Regulator of cell size that promotes cell size increase independently of mTOR and Hippo signaling pathways. Acts by stimulating the translation of specific mRNAs, including those encoding proteins affecting mitochondrial functions. Increases mitochondrial mass and respiration (Probable).</text>
</comment>
<comment type="alternative products">
    <event type="alternative splicing"/>
    <isoform>
        <id>A3KMN5-1</id>
        <name>1</name>
        <sequence type="displayed"/>
    </isoform>
    <isoform>
        <id>A3KMN5-2</id>
        <name>2</name>
        <sequence type="described" ref="VSP_028882"/>
    </isoform>
</comment>
<comment type="miscellaneous">
    <text evidence="4">Overexpression causes embryonic lethality. Conditional overexpression leads to increased cell size (PubMed:24656129).</text>
</comment>
<evidence type="ECO:0000255" key="1"/>
<evidence type="ECO:0000256" key="2">
    <source>
        <dbReference type="SAM" id="MobiDB-lite"/>
    </source>
</evidence>
<evidence type="ECO:0000303" key="3">
    <source>
    </source>
</evidence>
<evidence type="ECO:0000305" key="4">
    <source>
    </source>
</evidence>
<feature type="chain" id="PRO_0000308160" description="Protein Largen">
    <location>
        <begin position="1"/>
        <end position="304"/>
    </location>
</feature>
<feature type="region of interest" description="Disordered" evidence="2">
    <location>
        <begin position="1"/>
        <end position="27"/>
    </location>
</feature>
<feature type="region of interest" description="Disordered" evidence="2">
    <location>
        <begin position="66"/>
        <end position="109"/>
    </location>
</feature>
<feature type="region of interest" description="Disordered" evidence="2">
    <location>
        <begin position="114"/>
        <end position="133"/>
    </location>
</feature>
<feature type="region of interest" description="Disordered" evidence="2">
    <location>
        <begin position="236"/>
        <end position="304"/>
    </location>
</feature>
<feature type="coiled-coil region" evidence="1">
    <location>
        <begin position="33"/>
        <end position="70"/>
    </location>
</feature>
<feature type="compositionally biased region" description="Low complexity" evidence="2">
    <location>
        <begin position="1"/>
        <end position="22"/>
    </location>
</feature>
<feature type="compositionally biased region" description="Low complexity" evidence="2">
    <location>
        <begin position="77"/>
        <end position="91"/>
    </location>
</feature>
<feature type="compositionally biased region" description="Pro residues" evidence="2">
    <location>
        <begin position="120"/>
        <end position="129"/>
    </location>
</feature>
<feature type="compositionally biased region" description="Pro residues" evidence="2">
    <location>
        <begin position="275"/>
        <end position="289"/>
    </location>
</feature>
<feature type="splice variant" id="VSP_028882" description="In isoform 2." evidence="3">
    <location>
        <begin position="1"/>
        <end position="70"/>
    </location>
</feature>
<organism>
    <name type="scientific">Mus musculus</name>
    <name type="common">Mouse</name>
    <dbReference type="NCBI Taxonomy" id="10090"/>
    <lineage>
        <taxon>Eukaryota</taxon>
        <taxon>Metazoa</taxon>
        <taxon>Chordata</taxon>
        <taxon>Craniata</taxon>
        <taxon>Vertebrata</taxon>
        <taxon>Euteleostomi</taxon>
        <taxon>Mammalia</taxon>
        <taxon>Eutheria</taxon>
        <taxon>Euarchontoglires</taxon>
        <taxon>Glires</taxon>
        <taxon>Rodentia</taxon>
        <taxon>Myomorpha</taxon>
        <taxon>Muroidea</taxon>
        <taxon>Muridae</taxon>
        <taxon>Murinae</taxon>
        <taxon>Mus</taxon>
        <taxon>Mus</taxon>
    </lineage>
</organism>
<proteinExistence type="evidence at transcript level"/>
<accession>A3KMN5</accession>
<accession>Q8BLB9</accession>